<name>TRA2_DROME</name>
<keyword id="KW-0025">Alternative splicing</keyword>
<keyword id="KW-0217">Developmental protein</keyword>
<keyword id="KW-0221">Differentiation</keyword>
<keyword id="KW-0507">mRNA processing</keyword>
<keyword id="KW-0508">mRNA splicing</keyword>
<keyword id="KW-0597">Phosphoprotein</keyword>
<keyword id="KW-1185">Reference proteome</keyword>
<keyword id="KW-0694">RNA-binding</keyword>
<keyword id="KW-0726">Sexual differentiation</keyword>
<keyword id="KW-0744">Spermatogenesis</keyword>
<reference key="1">
    <citation type="journal article" date="1988" name="Cell">
        <title>The sex-determining gene tra-2 of Drosophila encodes a putative RNA binding protein.</title>
        <authorList>
            <person name="Amrein H."/>
            <person name="Gorman M."/>
            <person name="Noethiger R."/>
        </authorList>
    </citation>
    <scope>NUCLEOTIDE SEQUENCE [MRNA] (ISOFORM TMAJ)</scope>
    <scope>FUNCTION</scope>
    <scope>TISSUE SPECIFICITY</scope>
</reference>
<reference key="2">
    <citation type="journal article" date="1989" name="Cell">
        <authorList>
            <person name="Amrein H."/>
            <person name="Gorman M."/>
            <person name="Noethiger R."/>
        </authorList>
    </citation>
    <scope>ERRATUM OF PUBMED:3144434</scope>
</reference>
<reference key="3">
    <citation type="journal article" date="1990" name="EMBO J.">
        <title>Alternatively spliced transcripts of the sex-determining gene tra-2 of Drosophila encode functional proteins of different size.</title>
        <authorList>
            <person name="Amrein H."/>
            <person name="Maniatis T."/>
            <person name="Noethiger R."/>
        </authorList>
    </citation>
    <scope>NUCLEOTIDE SEQUENCE [GENOMIC DNA]</scope>
    <scope>ALTERNATIVE SPLICING (ISOFORMS TMAJ AND TMIN)</scope>
    <scope>FUNCTION</scope>
    <scope>TISSUE SPECIFICITY</scope>
</reference>
<reference key="4">
    <citation type="journal article" date="1990" name="Genes Dev.">
        <title>Alternative splicing of the sex determination gene transformer-2 is sex-specific in the germ line but not in the soma.</title>
        <authorList>
            <person name="Mattox W."/>
            <person name="Palmer M.J."/>
            <person name="Baker B.S."/>
        </authorList>
    </citation>
    <scope>NUCLEOTIDE SEQUENCE [MRNA] (ISOFORM MSTMIN)</scope>
    <scope>NUCLEOTIDE SEQUENCE [GENOMIC DNA]</scope>
    <scope>ALTERNATIVE SPLICING (ISOFORMS TMAJ; TMIN; MSTMAJ AND MSTMIN)</scope>
    <scope>FUNCTION</scope>
    <scope>TISSUE SPECIFICITY</scope>
    <source>
        <tissue>Imaginal disk</tissue>
    </source>
</reference>
<reference key="5">
    <citation type="journal article" date="2000" name="Science">
        <title>The genome sequence of Drosophila melanogaster.</title>
        <authorList>
            <person name="Adams M.D."/>
            <person name="Celniker S.E."/>
            <person name="Holt R.A."/>
            <person name="Evans C.A."/>
            <person name="Gocayne J.D."/>
            <person name="Amanatides P.G."/>
            <person name="Scherer S.E."/>
            <person name="Li P.W."/>
            <person name="Hoskins R.A."/>
            <person name="Galle R.F."/>
            <person name="George R.A."/>
            <person name="Lewis S.E."/>
            <person name="Richards S."/>
            <person name="Ashburner M."/>
            <person name="Henderson S.N."/>
            <person name="Sutton G.G."/>
            <person name="Wortman J.R."/>
            <person name="Yandell M.D."/>
            <person name="Zhang Q."/>
            <person name="Chen L.X."/>
            <person name="Brandon R.C."/>
            <person name="Rogers Y.-H.C."/>
            <person name="Blazej R.G."/>
            <person name="Champe M."/>
            <person name="Pfeiffer B.D."/>
            <person name="Wan K.H."/>
            <person name="Doyle C."/>
            <person name="Baxter E.G."/>
            <person name="Helt G."/>
            <person name="Nelson C.R."/>
            <person name="Miklos G.L.G."/>
            <person name="Abril J.F."/>
            <person name="Agbayani A."/>
            <person name="An H.-J."/>
            <person name="Andrews-Pfannkoch C."/>
            <person name="Baldwin D."/>
            <person name="Ballew R.M."/>
            <person name="Basu A."/>
            <person name="Baxendale J."/>
            <person name="Bayraktaroglu L."/>
            <person name="Beasley E.M."/>
            <person name="Beeson K.Y."/>
            <person name="Benos P.V."/>
            <person name="Berman B.P."/>
            <person name="Bhandari D."/>
            <person name="Bolshakov S."/>
            <person name="Borkova D."/>
            <person name="Botchan M.R."/>
            <person name="Bouck J."/>
            <person name="Brokstein P."/>
            <person name="Brottier P."/>
            <person name="Burtis K.C."/>
            <person name="Busam D.A."/>
            <person name="Butler H."/>
            <person name="Cadieu E."/>
            <person name="Center A."/>
            <person name="Chandra I."/>
            <person name="Cherry J.M."/>
            <person name="Cawley S."/>
            <person name="Dahlke C."/>
            <person name="Davenport L.B."/>
            <person name="Davies P."/>
            <person name="de Pablos B."/>
            <person name="Delcher A."/>
            <person name="Deng Z."/>
            <person name="Mays A.D."/>
            <person name="Dew I."/>
            <person name="Dietz S.M."/>
            <person name="Dodson K."/>
            <person name="Doup L.E."/>
            <person name="Downes M."/>
            <person name="Dugan-Rocha S."/>
            <person name="Dunkov B.C."/>
            <person name="Dunn P."/>
            <person name="Durbin K.J."/>
            <person name="Evangelista C.C."/>
            <person name="Ferraz C."/>
            <person name="Ferriera S."/>
            <person name="Fleischmann W."/>
            <person name="Fosler C."/>
            <person name="Gabrielian A.E."/>
            <person name="Garg N.S."/>
            <person name="Gelbart W.M."/>
            <person name="Glasser K."/>
            <person name="Glodek A."/>
            <person name="Gong F."/>
            <person name="Gorrell J.H."/>
            <person name="Gu Z."/>
            <person name="Guan P."/>
            <person name="Harris M."/>
            <person name="Harris N.L."/>
            <person name="Harvey D.A."/>
            <person name="Heiman T.J."/>
            <person name="Hernandez J.R."/>
            <person name="Houck J."/>
            <person name="Hostin D."/>
            <person name="Houston K.A."/>
            <person name="Howland T.J."/>
            <person name="Wei M.-H."/>
            <person name="Ibegwam C."/>
            <person name="Jalali M."/>
            <person name="Kalush F."/>
            <person name="Karpen G.H."/>
            <person name="Ke Z."/>
            <person name="Kennison J.A."/>
            <person name="Ketchum K.A."/>
            <person name="Kimmel B.E."/>
            <person name="Kodira C.D."/>
            <person name="Kraft C.L."/>
            <person name="Kravitz S."/>
            <person name="Kulp D."/>
            <person name="Lai Z."/>
            <person name="Lasko P."/>
            <person name="Lei Y."/>
            <person name="Levitsky A.A."/>
            <person name="Li J.H."/>
            <person name="Li Z."/>
            <person name="Liang Y."/>
            <person name="Lin X."/>
            <person name="Liu X."/>
            <person name="Mattei B."/>
            <person name="McIntosh T.C."/>
            <person name="McLeod M.P."/>
            <person name="McPherson D."/>
            <person name="Merkulov G."/>
            <person name="Milshina N.V."/>
            <person name="Mobarry C."/>
            <person name="Morris J."/>
            <person name="Moshrefi A."/>
            <person name="Mount S.M."/>
            <person name="Moy M."/>
            <person name="Murphy B."/>
            <person name="Murphy L."/>
            <person name="Muzny D.M."/>
            <person name="Nelson D.L."/>
            <person name="Nelson D.R."/>
            <person name="Nelson K.A."/>
            <person name="Nixon K."/>
            <person name="Nusskern D.R."/>
            <person name="Pacleb J.M."/>
            <person name="Palazzolo M."/>
            <person name="Pittman G.S."/>
            <person name="Pan S."/>
            <person name="Pollard J."/>
            <person name="Puri V."/>
            <person name="Reese M.G."/>
            <person name="Reinert K."/>
            <person name="Remington K."/>
            <person name="Saunders R.D.C."/>
            <person name="Scheeler F."/>
            <person name="Shen H."/>
            <person name="Shue B.C."/>
            <person name="Siden-Kiamos I."/>
            <person name="Simpson M."/>
            <person name="Skupski M.P."/>
            <person name="Smith T.J."/>
            <person name="Spier E."/>
            <person name="Spradling A.C."/>
            <person name="Stapleton M."/>
            <person name="Strong R."/>
            <person name="Sun E."/>
            <person name="Svirskas R."/>
            <person name="Tector C."/>
            <person name="Turner R."/>
            <person name="Venter E."/>
            <person name="Wang A.H."/>
            <person name="Wang X."/>
            <person name="Wang Z.-Y."/>
            <person name="Wassarman D.A."/>
            <person name="Weinstock G.M."/>
            <person name="Weissenbach J."/>
            <person name="Williams S.M."/>
            <person name="Woodage T."/>
            <person name="Worley K.C."/>
            <person name="Wu D."/>
            <person name="Yang S."/>
            <person name="Yao Q.A."/>
            <person name="Ye J."/>
            <person name="Yeh R.-F."/>
            <person name="Zaveri J.S."/>
            <person name="Zhan M."/>
            <person name="Zhang G."/>
            <person name="Zhao Q."/>
            <person name="Zheng L."/>
            <person name="Zheng X.H."/>
            <person name="Zhong F.N."/>
            <person name="Zhong W."/>
            <person name="Zhou X."/>
            <person name="Zhu S.C."/>
            <person name="Zhu X."/>
            <person name="Smith H.O."/>
            <person name="Gibbs R.A."/>
            <person name="Myers E.W."/>
            <person name="Rubin G.M."/>
            <person name="Venter J.C."/>
        </authorList>
    </citation>
    <scope>NUCLEOTIDE SEQUENCE [LARGE SCALE GENOMIC DNA]</scope>
    <source>
        <strain>Berkeley</strain>
    </source>
</reference>
<reference key="6">
    <citation type="journal article" date="2002" name="Genome Biol.">
        <title>Annotation of the Drosophila melanogaster euchromatic genome: a systematic review.</title>
        <authorList>
            <person name="Misra S."/>
            <person name="Crosby M.A."/>
            <person name="Mungall C.J."/>
            <person name="Matthews B.B."/>
            <person name="Campbell K.S."/>
            <person name="Hradecky P."/>
            <person name="Huang Y."/>
            <person name="Kaminker J.S."/>
            <person name="Millburn G.H."/>
            <person name="Prochnik S.E."/>
            <person name="Smith C.D."/>
            <person name="Tupy J.L."/>
            <person name="Whitfield E.J."/>
            <person name="Bayraktaroglu L."/>
            <person name="Berman B.P."/>
            <person name="Bettencourt B.R."/>
            <person name="Celniker S.E."/>
            <person name="de Grey A.D.N.J."/>
            <person name="Drysdale R.A."/>
            <person name="Harris N.L."/>
            <person name="Richter J."/>
            <person name="Russo S."/>
            <person name="Schroeder A.J."/>
            <person name="Shu S.Q."/>
            <person name="Stapleton M."/>
            <person name="Yamada C."/>
            <person name="Ashburner M."/>
            <person name="Gelbart W.M."/>
            <person name="Rubin G.M."/>
            <person name="Lewis S.E."/>
        </authorList>
    </citation>
    <scope>GENOME REANNOTATION</scope>
    <scope>ALTERNATIVE SPLICING</scope>
    <source>
        <strain>Berkeley</strain>
    </source>
</reference>
<reference key="7">
    <citation type="journal article" date="2002" name="Genome Biol.">
        <title>A Drosophila full-length cDNA resource.</title>
        <authorList>
            <person name="Stapleton M."/>
            <person name="Carlson J.W."/>
            <person name="Brokstein P."/>
            <person name="Yu C."/>
            <person name="Champe M."/>
            <person name="George R.A."/>
            <person name="Guarin H."/>
            <person name="Kronmiller B."/>
            <person name="Pacleb J.M."/>
            <person name="Park S."/>
            <person name="Wan K.H."/>
            <person name="Rubin G.M."/>
            <person name="Celniker S.E."/>
        </authorList>
    </citation>
    <scope>NUCLEOTIDE SEQUENCE [LARGE SCALE MRNA] (ISOFORM TMAJ)</scope>
    <source>
        <strain>Berkeley</strain>
        <tissue>Embryo</tissue>
    </source>
</reference>
<reference key="8">
    <citation type="journal article" date="1989" name="Cell">
        <title>The sex determination locus transformer-2 of Drosophila encodes a polypeptide with similarity to RNA binding proteins.</title>
        <authorList>
            <person name="Goralski T.J."/>
            <person name="Edstroem J.-E."/>
            <person name="Baker B.S."/>
        </authorList>
    </citation>
    <scope>NUCLEOTIDE SEQUENCE [MRNA] OF 9-264 (ISOFORM TMAJ)</scope>
    <scope>FUNCTION</scope>
</reference>
<reference key="9">
    <citation type="journal article" date="1991" name="Cell">
        <title>Sex-specific splicing and polyadenylation of dsx pre-mRNA requires a sequence that binds specifically to tra-2 protein in vitro.</title>
        <authorList>
            <person name="Hedley M.L."/>
            <person name="Maniatis T."/>
        </authorList>
    </citation>
    <scope>IDENTIFICATION OF A TRA-2 BINDING SITE IN PRE-MRNA</scope>
</reference>
<reference key="10">
    <citation type="journal article" date="1993" name="Cell">
        <title>A splicing enhancer complex controls alternative splicing of doublesex pre-mRNA.</title>
        <authorList>
            <person name="Tian M."/>
            <person name="Maniatis T."/>
        </authorList>
    </citation>
    <scope>INTERACTION WITH SR PROTEINS IN ENHANCER COMPLEX</scope>
</reference>
<reference key="11">
    <citation type="journal article" date="1994" name="Cell">
        <title>The role of specific protein-RNA and protein-protein interactions in positive and negative control of pre-mRNA splicing by Transformer 2.</title>
        <authorList>
            <person name="Amrein H."/>
            <person name="Hedley M.L."/>
            <person name="Maniatis T."/>
        </authorList>
    </citation>
    <scope>CHARACTERIZATION OF STRUCTURAL DOMAINS</scope>
    <scope>MUTAGENESIS</scope>
</reference>
<reference key="12">
    <citation type="journal article" date="1995" name="Genes Dev.">
        <title>Synergistic interactions between two distinct elements of a regulated splicing enhancer.</title>
        <authorList>
            <person name="Lynch K.W."/>
            <person name="Maniatis T."/>
        </authorList>
    </citation>
    <scope>IDENTIFICATION OF A PURINE-RICH ENHANCER IN THE ENHANCER COMPLEX</scope>
</reference>
<reference key="13">
    <citation type="journal article" date="1998" name="Mol. Cell. Biol.">
        <title>Regulation of sex-specific selection of fruitless 5' splice sites by transformer and transformer-2.</title>
        <authorList>
            <person name="Heinrichs V."/>
            <person name="Ryner L.C."/>
            <person name="Baker B.S."/>
        </authorList>
    </citation>
    <scope>FUNCTION</scope>
</reference>
<reference key="14">
    <citation type="journal article" date="2008" name="J. Proteome Res.">
        <title>Phosphoproteome analysis of Drosophila melanogaster embryos.</title>
        <authorList>
            <person name="Zhai B."/>
            <person name="Villen J."/>
            <person name="Beausoleil S.A."/>
            <person name="Mintseris J."/>
            <person name="Gygi S.P."/>
        </authorList>
    </citation>
    <scope>PHOSPHORYLATION [LARGE SCALE ANALYSIS] AT SER-40; THR-180; SER-212; SER-214 AND SER-254</scope>
    <scope>IDENTIFICATION BY MASS SPECTROMETRY</scope>
    <source>
        <tissue>Embryo</tissue>
    </source>
</reference>
<sequence length="264" mass="31031">MDREPLSSGRLHCSARYKHKRSASSSSAGTTSSGHKDRRSDYDYCGSRRHQRSSSRRRSRSRSSSESPPPEPRHRSGRSSRDRERMHKSREHPQASRCIGVFGLNTNTSQHKVRELFNKYGPIERIQMVIDAQTQRSRGFCFIYFEKLSDARAAKDSCSGIEVDGRRIRVDFSITQRAHTPTPGVYLGRQPRGKAPRSFSPRRGRRVYHDRSASPYDNYRDRYDYRNDRYDRNLRRSPSRNRYTRNRSYSRSRSPQLRRTSSRY</sequence>
<comment type="function">
    <text evidence="5 6 7 8 10">Required for female sex determination in somatic cells and for spermatogenesis in male germ cells. Positive regulator of female-specific splicing and/or polyadenylation of doublesex (dsx) pre-mRNA. Splicing requires an enhancer complex, dsxRE (dsx repeat element: which contains six copies of a 13-nucleotide repeat and a purine-rich enhancer (PRE)). DsxRE is formed through cooperative interactions between tra, tra2 and the sr proteins, and these interactions require both the repeat sequences and PRE. PRE is required for specific binding of tra2 to the dsxRE. Protein-RNA and protein-protein interactions are involved in tra-2 dependent activation and repression of alternative splicing. Together with tra-2, plays a role in switching fru splicing from the male-specific pattern to the female-specific pattern through activation of the female-specific fru 5'-splice site.</text>
</comment>
<comment type="alternative products">
    <event type="alternative splicing"/>
    <isoform>
        <id>P19018-1</id>
        <name>Tmaj</name>
        <name>Major</name>
        <name>Mattox-A</name>
        <name>A</name>
        <name>F</name>
        <name>G</name>
        <sequence type="displayed"/>
    </isoform>
    <isoform>
        <id>P19018-2</id>
        <name>Tmin</name>
        <name>Minor</name>
        <name>Mattox-B</name>
        <name>C</name>
        <name>D</name>
        <sequence type="described" ref="VSP_005901"/>
    </isoform>
    <isoform>
        <id>P19018-3</id>
        <name>MsTmaj</name>
        <name>Mattox-C</name>
        <name>E</name>
        <sequence type="described" ref="VSP_005900"/>
    </isoform>
    <isoform>
        <id>P19018-4</id>
        <name>MsTmin</name>
        <name>Mattox-D</name>
        <name>B</name>
        <sequence type="described" ref="VSP_005902"/>
    </isoform>
</comment>
<comment type="tissue specificity">
    <text evidence="5 6 8">Isoform Tmaj and isoform Tmin are expressed in males and females. Isoform msTmaj and isoform msTmin are present only in male germ cells.</text>
</comment>
<comment type="domain">
    <text>The RS2 (Arg/Ser-rich domain 2) and RNP-CS (ribonucleoprotein consensus sequence) domains are required for both male sterility and female-specific dsx splicing but the RS1 domain is dispensable.</text>
</comment>
<comment type="PTM">
    <text evidence="1">Extensively phosphorylated on serine residues in the RS domain.</text>
</comment>
<comment type="similarity">
    <text evidence="12">Belongs to the splicing factor SR family.</text>
</comment>
<dbReference type="EMBL" id="M23633">
    <property type="protein sequence ID" value="AAA28953.1"/>
    <property type="molecule type" value="mRNA"/>
</dbReference>
<dbReference type="EMBL" id="X57484">
    <property type="protein sequence ID" value="CAA40722.1"/>
    <property type="molecule type" value="Genomic_DNA"/>
</dbReference>
<dbReference type="EMBL" id="M30939">
    <property type="protein sequence ID" value="AAA28954.1"/>
    <property type="molecule type" value="Genomic_DNA"/>
</dbReference>
<dbReference type="EMBL" id="M30939">
    <property type="protein sequence ID" value="AAA28955.1"/>
    <property type="molecule type" value="Genomic_DNA"/>
</dbReference>
<dbReference type="EMBL" id="M30939">
    <property type="protein sequence ID" value="AAA28956.1"/>
    <property type="molecule type" value="Genomic_DNA"/>
</dbReference>
<dbReference type="EMBL" id="M30939">
    <property type="protein sequence ID" value="AAA28957.1"/>
    <property type="molecule type" value="Genomic_DNA"/>
</dbReference>
<dbReference type="EMBL" id="M76381">
    <property type="protein sequence ID" value="AAA69686.1"/>
    <property type="molecule type" value="mRNA"/>
</dbReference>
<dbReference type="EMBL" id="AE013599">
    <property type="protein sequence ID" value="AAF58232.2"/>
    <property type="molecule type" value="Genomic_DNA"/>
</dbReference>
<dbReference type="EMBL" id="AE013599">
    <property type="protein sequence ID" value="AAM68557.1"/>
    <property type="molecule type" value="Genomic_DNA"/>
</dbReference>
<dbReference type="EMBL" id="AE013599">
    <property type="protein sequence ID" value="AAM68559.1"/>
    <property type="molecule type" value="Genomic_DNA"/>
</dbReference>
<dbReference type="EMBL" id="AE013599">
    <property type="protein sequence ID" value="AAM68560.1"/>
    <property type="molecule type" value="Genomic_DNA"/>
</dbReference>
<dbReference type="EMBL" id="AE013599">
    <property type="protein sequence ID" value="AAS64910.1"/>
    <property type="molecule type" value="Genomic_DNA"/>
</dbReference>
<dbReference type="EMBL" id="AE013599">
    <property type="protein sequence ID" value="AAS64911.1"/>
    <property type="molecule type" value="Genomic_DNA"/>
</dbReference>
<dbReference type="EMBL" id="AY058768">
    <property type="protein sequence ID" value="AAL13997.1"/>
    <property type="molecule type" value="mRNA"/>
</dbReference>
<dbReference type="EMBL" id="J03155">
    <property type="protein sequence ID" value="AAA62771.1"/>
    <property type="molecule type" value="mRNA"/>
</dbReference>
<dbReference type="PIR" id="A32373">
    <property type="entry name" value="A32373"/>
</dbReference>
<dbReference type="PIR" id="D35846">
    <property type="entry name" value="D35846"/>
</dbReference>
<dbReference type="PIR" id="S12003">
    <property type="entry name" value="A31638"/>
</dbReference>
<dbReference type="RefSeq" id="NP_476763.1">
    <molecule id="P19018-4"/>
    <property type="nucleotide sequence ID" value="NM_057415.3"/>
</dbReference>
<dbReference type="RefSeq" id="NP_476764.1">
    <molecule id="P19018-1"/>
    <property type="nucleotide sequence ID" value="NM_057416.3"/>
</dbReference>
<dbReference type="RefSeq" id="NP_476765.1">
    <molecule id="P19018-2"/>
    <property type="nucleotide sequence ID" value="NM_057417.3"/>
</dbReference>
<dbReference type="RefSeq" id="NP_476766.1">
    <molecule id="P19018-3"/>
    <property type="nucleotide sequence ID" value="NM_057418.2"/>
</dbReference>
<dbReference type="RefSeq" id="NP_599107.1">
    <molecule id="P19018-2"/>
    <property type="nucleotide sequence ID" value="NM_134280.1"/>
</dbReference>
<dbReference type="RefSeq" id="NP_995834.1">
    <molecule id="P19018-1"/>
    <property type="nucleotide sequence ID" value="NM_206112.2"/>
</dbReference>
<dbReference type="RefSeq" id="NP_995835.1">
    <molecule id="P19018-1"/>
    <property type="nucleotide sequence ID" value="NM_206113.2"/>
</dbReference>
<dbReference type="SMR" id="P19018"/>
<dbReference type="BioGRID" id="62366">
    <property type="interactions" value="14"/>
</dbReference>
<dbReference type="DIP" id="DIP-17430N"/>
<dbReference type="FunCoup" id="P19018">
    <property type="interactions" value="2120"/>
</dbReference>
<dbReference type="IntAct" id="P19018">
    <property type="interactions" value="3"/>
</dbReference>
<dbReference type="STRING" id="7227.FBpp0088946"/>
<dbReference type="GlyGen" id="P19018">
    <property type="glycosylation" value="1 site"/>
</dbReference>
<dbReference type="iPTMnet" id="P19018"/>
<dbReference type="PaxDb" id="7227-FBpp0088562"/>
<dbReference type="EnsemblMetazoa" id="FBtr0089615">
    <molecule id="P19018-2"/>
    <property type="protein sequence ID" value="FBpp0088560"/>
    <property type="gene ID" value="FBgn0003742"/>
</dbReference>
<dbReference type="EnsemblMetazoa" id="FBtr0089616">
    <molecule id="P19018-3"/>
    <property type="protein sequence ID" value="FBpp0088561"/>
    <property type="gene ID" value="FBgn0003742"/>
</dbReference>
<dbReference type="EnsemblMetazoa" id="FBtr0089617">
    <molecule id="P19018-1"/>
    <property type="protein sequence ID" value="FBpp0088562"/>
    <property type="gene ID" value="FBgn0003742"/>
</dbReference>
<dbReference type="EnsemblMetazoa" id="FBtr0089618">
    <molecule id="P19018-4"/>
    <property type="protein sequence ID" value="FBpp0088563"/>
    <property type="gene ID" value="FBgn0003742"/>
</dbReference>
<dbReference type="EnsemblMetazoa" id="FBtr0089619">
    <molecule id="P19018-2"/>
    <property type="protein sequence ID" value="FBpp0088564"/>
    <property type="gene ID" value="FBgn0003742"/>
</dbReference>
<dbReference type="EnsemblMetazoa" id="FBtr0089620">
    <molecule id="P19018-1"/>
    <property type="protein sequence ID" value="FBpp0088947"/>
    <property type="gene ID" value="FBgn0003742"/>
</dbReference>
<dbReference type="EnsemblMetazoa" id="FBtr0089621">
    <molecule id="P19018-1"/>
    <property type="protein sequence ID" value="FBpp0088946"/>
    <property type="gene ID" value="FBgn0003742"/>
</dbReference>
<dbReference type="GeneID" id="36619"/>
<dbReference type="KEGG" id="dme:Dmel_CG10128"/>
<dbReference type="AGR" id="FB:FBgn0003742"/>
<dbReference type="CTD" id="36619"/>
<dbReference type="FlyBase" id="FBgn0003742">
    <property type="gene designation" value="tra2"/>
</dbReference>
<dbReference type="VEuPathDB" id="VectorBase:FBgn0003742"/>
<dbReference type="eggNOG" id="KOG0118">
    <property type="taxonomic scope" value="Eukaryota"/>
</dbReference>
<dbReference type="GeneTree" id="ENSGT00940000168616"/>
<dbReference type="InParanoid" id="P19018"/>
<dbReference type="OMA" id="RAKEECQ"/>
<dbReference type="OrthoDB" id="439808at2759"/>
<dbReference type="PhylomeDB" id="P19018"/>
<dbReference type="Reactome" id="R-DME-72163">
    <property type="pathway name" value="mRNA Splicing - Major Pathway"/>
</dbReference>
<dbReference type="Reactome" id="R-DME-72203">
    <property type="pathway name" value="Processing of Capped Intron-Containing Pre-mRNA"/>
</dbReference>
<dbReference type="Reactome" id="R-DME-9013418">
    <property type="pathway name" value="RHOBTB2 GTPase cycle"/>
</dbReference>
<dbReference type="Reactome" id="R-DME-9013422">
    <property type="pathway name" value="RHOBTB1 GTPase cycle"/>
</dbReference>
<dbReference type="BioGRID-ORCS" id="36619">
    <property type="hits" value="0 hits in 3 CRISPR screens"/>
</dbReference>
<dbReference type="GenomeRNAi" id="36619"/>
<dbReference type="PRO" id="PR:P19018"/>
<dbReference type="Proteomes" id="UP000000803">
    <property type="component" value="Chromosome 2R"/>
</dbReference>
<dbReference type="Bgee" id="FBgn0003742">
    <property type="expression patterns" value="Expressed in imaginal disc and 106 other cell types or tissues"/>
</dbReference>
<dbReference type="GO" id="GO:0071011">
    <property type="term" value="C:precatalytic spliceosome"/>
    <property type="evidence" value="ECO:0007005"/>
    <property type="project" value="FlyBase"/>
</dbReference>
<dbReference type="GO" id="GO:0005681">
    <property type="term" value="C:spliceosomal complex"/>
    <property type="evidence" value="ECO:0000318"/>
    <property type="project" value="GO_Central"/>
</dbReference>
<dbReference type="GO" id="GO:0042802">
    <property type="term" value="F:identical protein binding"/>
    <property type="evidence" value="ECO:0000353"/>
    <property type="project" value="FlyBase"/>
</dbReference>
<dbReference type="GO" id="GO:0003729">
    <property type="term" value="F:mRNA binding"/>
    <property type="evidence" value="ECO:0000250"/>
    <property type="project" value="FlyBase"/>
</dbReference>
<dbReference type="GO" id="GO:0036002">
    <property type="term" value="F:pre-mRNA binding"/>
    <property type="evidence" value="ECO:0000314"/>
    <property type="project" value="FlyBase"/>
</dbReference>
<dbReference type="GO" id="GO:0003723">
    <property type="term" value="F:RNA binding"/>
    <property type="evidence" value="ECO:0000318"/>
    <property type="project" value="GO_Central"/>
</dbReference>
<dbReference type="GO" id="GO:0030154">
    <property type="term" value="P:cell differentiation"/>
    <property type="evidence" value="ECO:0007669"/>
    <property type="project" value="UniProtKB-KW"/>
</dbReference>
<dbReference type="GO" id="GO:0030237">
    <property type="term" value="P:female sex determination"/>
    <property type="evidence" value="ECO:0000315"/>
    <property type="project" value="UniProtKB"/>
</dbReference>
<dbReference type="GO" id="GO:0019101">
    <property type="term" value="P:female somatic sex determination"/>
    <property type="evidence" value="ECO:0000304"/>
    <property type="project" value="FlyBase"/>
</dbReference>
<dbReference type="GO" id="GO:0019102">
    <property type="term" value="P:male somatic sex determination"/>
    <property type="evidence" value="ECO:0000304"/>
    <property type="project" value="FlyBase"/>
</dbReference>
<dbReference type="GO" id="GO:0006397">
    <property type="term" value="P:mRNA processing"/>
    <property type="evidence" value="ECO:0000315"/>
    <property type="project" value="UniProtKB"/>
</dbReference>
<dbReference type="GO" id="GO:0000398">
    <property type="term" value="P:mRNA splicing, via spliceosome"/>
    <property type="evidence" value="ECO:0000314"/>
    <property type="project" value="UniProtKB"/>
</dbReference>
<dbReference type="GO" id="GO:0048026">
    <property type="term" value="P:positive regulation of mRNA splicing, via spliceosome"/>
    <property type="evidence" value="ECO:0000318"/>
    <property type="project" value="GO_Central"/>
</dbReference>
<dbReference type="GO" id="GO:0000381">
    <property type="term" value="P:regulation of alternative mRNA splicing, via spliceosome"/>
    <property type="evidence" value="ECO:0000314"/>
    <property type="project" value="FlyBase"/>
</dbReference>
<dbReference type="GO" id="GO:0022414">
    <property type="term" value="P:reproductive process"/>
    <property type="evidence" value="ECO:0000303"/>
    <property type="project" value="UniProtKB"/>
</dbReference>
<dbReference type="GO" id="GO:0007530">
    <property type="term" value="P:sex determination"/>
    <property type="evidence" value="ECO:0000303"/>
    <property type="project" value="UniProtKB"/>
</dbReference>
<dbReference type="GO" id="GO:0007548">
    <property type="term" value="P:sex differentiation"/>
    <property type="evidence" value="ECO:0007669"/>
    <property type="project" value="UniProtKB-KW"/>
</dbReference>
<dbReference type="GO" id="GO:0007283">
    <property type="term" value="P:spermatogenesis"/>
    <property type="evidence" value="ECO:0000303"/>
    <property type="project" value="FlyBase"/>
</dbReference>
<dbReference type="GO" id="GO:0000245">
    <property type="term" value="P:spliceosomal complex assembly"/>
    <property type="evidence" value="ECO:0000303"/>
    <property type="project" value="FlyBase"/>
</dbReference>
<dbReference type="CDD" id="cd12363">
    <property type="entry name" value="RRM_TRA2"/>
    <property type="match status" value="1"/>
</dbReference>
<dbReference type="Gene3D" id="3.30.70.330">
    <property type="match status" value="1"/>
</dbReference>
<dbReference type="InterPro" id="IPR012677">
    <property type="entry name" value="Nucleotide-bd_a/b_plait_sf"/>
</dbReference>
<dbReference type="InterPro" id="IPR035979">
    <property type="entry name" value="RBD_domain_sf"/>
</dbReference>
<dbReference type="InterPro" id="IPR050441">
    <property type="entry name" value="RBM"/>
</dbReference>
<dbReference type="InterPro" id="IPR000504">
    <property type="entry name" value="RRM_dom"/>
</dbReference>
<dbReference type="PANTHER" id="PTHR48034">
    <property type="entry name" value="TRANSFORMER-2 SEX-DETERMINING PROTEIN-RELATED"/>
    <property type="match status" value="1"/>
</dbReference>
<dbReference type="Pfam" id="PF00076">
    <property type="entry name" value="RRM_1"/>
    <property type="match status" value="1"/>
</dbReference>
<dbReference type="SMART" id="SM00360">
    <property type="entry name" value="RRM"/>
    <property type="match status" value="1"/>
</dbReference>
<dbReference type="SUPFAM" id="SSF54928">
    <property type="entry name" value="RNA-binding domain, RBD"/>
    <property type="match status" value="1"/>
</dbReference>
<dbReference type="PROSITE" id="PS50102">
    <property type="entry name" value="RRM"/>
    <property type="match status" value="1"/>
</dbReference>
<evidence type="ECO:0000250" key="1"/>
<evidence type="ECO:0000255" key="2">
    <source>
        <dbReference type="PROSITE-ProRule" id="PRU00176"/>
    </source>
</evidence>
<evidence type="ECO:0000256" key="3">
    <source>
        <dbReference type="SAM" id="MobiDB-lite"/>
    </source>
</evidence>
<evidence type="ECO:0000269" key="4">
    <source>
    </source>
</evidence>
<evidence type="ECO:0000269" key="5">
    <source>
    </source>
</evidence>
<evidence type="ECO:0000269" key="6">
    <source>
    </source>
</evidence>
<evidence type="ECO:0000269" key="7">
    <source>
    </source>
</evidence>
<evidence type="ECO:0000269" key="8">
    <source>
    </source>
</evidence>
<evidence type="ECO:0000269" key="9">
    <source>
    </source>
</evidence>
<evidence type="ECO:0000269" key="10">
    <source>
    </source>
</evidence>
<evidence type="ECO:0000303" key="11">
    <source>
    </source>
</evidence>
<evidence type="ECO:0000305" key="12"/>
<feature type="chain" id="PRO_0000081986" description="Transformer-2 sex-determining protein">
    <location>
        <begin position="1"/>
        <end position="264"/>
    </location>
</feature>
<feature type="domain" description="RRM" evidence="2">
    <location>
        <begin position="97"/>
        <end position="175"/>
    </location>
</feature>
<feature type="region of interest" description="Disordered" evidence="3">
    <location>
        <begin position="1"/>
        <end position="96"/>
    </location>
</feature>
<feature type="region of interest" description="Linker">
    <location>
        <begin position="176"/>
        <end position="196"/>
    </location>
</feature>
<feature type="region of interest" description="Disordered" evidence="3">
    <location>
        <begin position="179"/>
        <end position="264"/>
    </location>
</feature>
<feature type="compositionally biased region" description="Basic residues" evidence="3">
    <location>
        <begin position="13"/>
        <end position="22"/>
    </location>
</feature>
<feature type="compositionally biased region" description="Low complexity" evidence="3">
    <location>
        <begin position="23"/>
        <end position="33"/>
    </location>
</feature>
<feature type="compositionally biased region" description="Basic residues" evidence="3">
    <location>
        <begin position="47"/>
        <end position="61"/>
    </location>
</feature>
<feature type="compositionally biased region" description="Basic and acidic residues" evidence="3">
    <location>
        <begin position="71"/>
        <end position="85"/>
    </location>
</feature>
<feature type="compositionally biased region" description="Basic residues" evidence="3">
    <location>
        <begin position="191"/>
        <end position="206"/>
    </location>
</feature>
<feature type="compositionally biased region" description="Basic and acidic residues" evidence="3">
    <location>
        <begin position="207"/>
        <end position="234"/>
    </location>
</feature>
<feature type="compositionally biased region" description="Basic residues" evidence="3">
    <location>
        <begin position="235"/>
        <end position="250"/>
    </location>
</feature>
<feature type="modified residue" description="Phosphoserine" evidence="4">
    <location>
        <position position="40"/>
    </location>
</feature>
<feature type="modified residue" description="Phosphothreonine" evidence="4">
    <location>
        <position position="180"/>
    </location>
</feature>
<feature type="modified residue" description="Phosphoserine" evidence="4">
    <location>
        <position position="212"/>
    </location>
</feature>
<feature type="modified residue" description="Phosphoserine" evidence="4">
    <location>
        <position position="214"/>
    </location>
</feature>
<feature type="modified residue" description="Phosphoserine" evidence="4">
    <location>
        <position position="254"/>
    </location>
</feature>
<feature type="splice variant" id="VSP_005900" description="In isoform MsTmaj." evidence="12">
    <location>
        <begin position="1"/>
        <end position="85"/>
    </location>
</feature>
<feature type="splice variant" id="VSP_005901" description="In isoform Tmin." evidence="12">
    <location>
        <begin position="2"/>
        <end position="39"/>
    </location>
</feature>
<feature type="splice variant" id="VSP_005902" description="In isoform MsTmin." evidence="11">
    <original>TQRSRGFCFIYFEKLSDARAAKDSCSGIEVDGRRIRVDFSITQRAHTPTPGVYLGRQPRGKAPRSFSPRRGRRVYHDRSASPYDNYRDRYDYRNDRYDRNLRRSPSRNRYTRNRSYSRSRSPQLRRTSSRY</original>
    <variation>INP</variation>
    <location>
        <begin position="134"/>
        <end position="264"/>
    </location>
</feature>
<feature type="mutagenesis site" description="In d2; greatly reduced female-specific DSX splicing." evidence="9">
    <location>
        <begin position="11"/>
        <end position="82"/>
    </location>
</feature>
<feature type="mutagenesis site" description="In d1; greatly reduced female-specific DSX splicing. Retains male fertility." evidence="9">
    <location>
        <begin position="49"/>
        <end position="82"/>
    </location>
</feature>
<feature type="mutagenesis site" description="In a36; loss of female-specific DSX splicing. Loss of male fertility." evidence="9">
    <location>
        <begin position="113"/>
        <end position="123"/>
    </location>
</feature>
<feature type="mutagenesis site" description="In pm1; loss of female-specific DSX splicing. Loss of male fertility." evidence="9">
    <original>R</original>
    <variation>L</variation>
    <location>
        <position position="138"/>
    </location>
</feature>
<feature type="mutagenesis site" description="In pm2; no female-specific DSX splicing. Some low male fertility." evidence="9">
    <original>F</original>
    <variation>A</variation>
    <location>
        <position position="140"/>
    </location>
</feature>
<feature type="mutagenesis site" description="In ts1; little female-specific DSX splicing. Loss of male fertility and temperature-sensitive phenotype." evidence="9">
    <original>A</original>
    <variation>V</variation>
    <location>
        <position position="151"/>
    </location>
</feature>
<feature type="mutagenesis site" description="In d5; loss of female-specific DSX splicing. Loss of male fertility." evidence="9">
    <location>
        <begin position="172"/>
        <end position="264"/>
    </location>
</feature>
<feature type="mutagenesis site" description="In pm3; greatly reduced female-specific DSX splicing. Retains male fertility and temperature-sensitive phenotype." evidence="9">
    <original>S</original>
    <variation>A</variation>
    <location>
        <position position="173"/>
    </location>
</feature>
<feature type="mutagenesis site" description="In a15, loss of female-specific DSX splicing and male fertility." evidence="9">
    <original>S</original>
    <variation>F</variation>
    <location>
        <position position="173"/>
    </location>
</feature>
<feature type="mutagenesis site" description="In pm4; loss of female-specific DSX splicing. Retains male fertility and temperature-sensitive phenotype." evidence="9">
    <original>S</original>
    <variation>T</variation>
    <location>
        <position position="173"/>
    </location>
</feature>
<feature type="mutagenesis site" description="In ts2; temperature-sensitive phenotype." evidence="9">
    <original>P</original>
    <variation>S</variation>
    <location>
        <position position="181"/>
    </location>
</feature>
<feature type="mutagenesis site" description="In d4; loss of female-specific DSX splicing. Greatly reduced male fertility." evidence="9">
    <location>
        <begin position="205"/>
        <end position="264"/>
    </location>
</feature>
<feature type="mutagenesis site" description="In d3; greatly reduced female-specific DSX splicing. Retains male fertility." evidence="9">
    <location>
        <begin position="236"/>
        <end position="264"/>
    </location>
</feature>
<protein>
    <recommendedName>
        <fullName>Transformer-2 sex-determining protein</fullName>
    </recommendedName>
</protein>
<organism>
    <name type="scientific">Drosophila melanogaster</name>
    <name type="common">Fruit fly</name>
    <dbReference type="NCBI Taxonomy" id="7227"/>
    <lineage>
        <taxon>Eukaryota</taxon>
        <taxon>Metazoa</taxon>
        <taxon>Ecdysozoa</taxon>
        <taxon>Arthropoda</taxon>
        <taxon>Hexapoda</taxon>
        <taxon>Insecta</taxon>
        <taxon>Pterygota</taxon>
        <taxon>Neoptera</taxon>
        <taxon>Endopterygota</taxon>
        <taxon>Diptera</taxon>
        <taxon>Brachycera</taxon>
        <taxon>Muscomorpha</taxon>
        <taxon>Ephydroidea</taxon>
        <taxon>Drosophilidae</taxon>
        <taxon>Drosophila</taxon>
        <taxon>Sophophora</taxon>
    </lineage>
</organism>
<proteinExistence type="evidence at protein level"/>
<accession>P19018</accession>
<accession>A4UZH1</accession>
<accession>Q0E977</accession>
<accession>Q9V734</accession>
<gene>
    <name type="primary">tra2</name>
    <name type="synonym">tra-2</name>
    <name type="ORF">CG10128</name>
</gene>